<dbReference type="EMBL" id="CP001649">
    <property type="protein sequence ID" value="ACS80663.1"/>
    <property type="molecule type" value="Genomic_DNA"/>
</dbReference>
<dbReference type="RefSeq" id="WP_015852479.1">
    <property type="nucleotide sequence ID" value="NC_012881.1"/>
</dbReference>
<dbReference type="SMR" id="C6BYQ6"/>
<dbReference type="STRING" id="526222.Desal_2608"/>
<dbReference type="KEGG" id="dsa:Desal_2608"/>
<dbReference type="eggNOG" id="COG0254">
    <property type="taxonomic scope" value="Bacteria"/>
</dbReference>
<dbReference type="HOGENOM" id="CLU_114306_4_0_7"/>
<dbReference type="OrthoDB" id="9803251at2"/>
<dbReference type="Proteomes" id="UP000002601">
    <property type="component" value="Chromosome"/>
</dbReference>
<dbReference type="GO" id="GO:1990904">
    <property type="term" value="C:ribonucleoprotein complex"/>
    <property type="evidence" value="ECO:0007669"/>
    <property type="project" value="UniProtKB-KW"/>
</dbReference>
<dbReference type="GO" id="GO:0005840">
    <property type="term" value="C:ribosome"/>
    <property type="evidence" value="ECO:0007669"/>
    <property type="project" value="UniProtKB-KW"/>
</dbReference>
<dbReference type="GO" id="GO:0046872">
    <property type="term" value="F:metal ion binding"/>
    <property type="evidence" value="ECO:0007669"/>
    <property type="project" value="UniProtKB-KW"/>
</dbReference>
<dbReference type="GO" id="GO:0019843">
    <property type="term" value="F:rRNA binding"/>
    <property type="evidence" value="ECO:0007669"/>
    <property type="project" value="UniProtKB-KW"/>
</dbReference>
<dbReference type="GO" id="GO:0003735">
    <property type="term" value="F:structural constituent of ribosome"/>
    <property type="evidence" value="ECO:0007669"/>
    <property type="project" value="InterPro"/>
</dbReference>
<dbReference type="GO" id="GO:0006412">
    <property type="term" value="P:translation"/>
    <property type="evidence" value="ECO:0007669"/>
    <property type="project" value="UniProtKB-UniRule"/>
</dbReference>
<dbReference type="Gene3D" id="4.10.830.30">
    <property type="entry name" value="Ribosomal protein L31"/>
    <property type="match status" value="1"/>
</dbReference>
<dbReference type="HAMAP" id="MF_00501">
    <property type="entry name" value="Ribosomal_bL31_1"/>
    <property type="match status" value="1"/>
</dbReference>
<dbReference type="InterPro" id="IPR034704">
    <property type="entry name" value="Ribosomal_bL28/bL31-like_sf"/>
</dbReference>
<dbReference type="InterPro" id="IPR002150">
    <property type="entry name" value="Ribosomal_bL31"/>
</dbReference>
<dbReference type="InterPro" id="IPR027491">
    <property type="entry name" value="Ribosomal_bL31_A"/>
</dbReference>
<dbReference type="InterPro" id="IPR042105">
    <property type="entry name" value="Ribosomal_bL31_sf"/>
</dbReference>
<dbReference type="NCBIfam" id="TIGR00105">
    <property type="entry name" value="L31"/>
    <property type="match status" value="1"/>
</dbReference>
<dbReference type="NCBIfam" id="NF000612">
    <property type="entry name" value="PRK00019.1"/>
    <property type="match status" value="1"/>
</dbReference>
<dbReference type="NCBIfam" id="NF001809">
    <property type="entry name" value="PRK00528.1"/>
    <property type="match status" value="1"/>
</dbReference>
<dbReference type="PANTHER" id="PTHR33280">
    <property type="entry name" value="50S RIBOSOMAL PROTEIN L31, CHLOROPLASTIC"/>
    <property type="match status" value="1"/>
</dbReference>
<dbReference type="PANTHER" id="PTHR33280:SF6">
    <property type="entry name" value="LARGE RIBOSOMAL SUBUNIT PROTEIN BL31A"/>
    <property type="match status" value="1"/>
</dbReference>
<dbReference type="Pfam" id="PF01197">
    <property type="entry name" value="Ribosomal_L31"/>
    <property type="match status" value="1"/>
</dbReference>
<dbReference type="PRINTS" id="PR01249">
    <property type="entry name" value="RIBOSOMALL31"/>
</dbReference>
<dbReference type="SUPFAM" id="SSF143800">
    <property type="entry name" value="L28p-like"/>
    <property type="match status" value="1"/>
</dbReference>
<dbReference type="PROSITE" id="PS01143">
    <property type="entry name" value="RIBOSOMAL_L31"/>
    <property type="match status" value="1"/>
</dbReference>
<comment type="function">
    <text evidence="1">Binds the 23S rRNA.</text>
</comment>
<comment type="cofactor">
    <cofactor evidence="1">
        <name>Zn(2+)</name>
        <dbReference type="ChEBI" id="CHEBI:29105"/>
    </cofactor>
    <text evidence="1">Binds 1 zinc ion per subunit.</text>
</comment>
<comment type="subunit">
    <text evidence="1">Part of the 50S ribosomal subunit.</text>
</comment>
<comment type="similarity">
    <text evidence="1">Belongs to the bacterial ribosomal protein bL31 family. Type A subfamily.</text>
</comment>
<feature type="chain" id="PRO_1000206518" description="Large ribosomal subunit protein bL31">
    <location>
        <begin position="1"/>
        <end position="76"/>
    </location>
</feature>
<feature type="binding site" evidence="1">
    <location>
        <position position="16"/>
    </location>
    <ligand>
        <name>Zn(2+)</name>
        <dbReference type="ChEBI" id="CHEBI:29105"/>
    </ligand>
</feature>
<feature type="binding site" evidence="1">
    <location>
        <position position="18"/>
    </location>
    <ligand>
        <name>Zn(2+)</name>
        <dbReference type="ChEBI" id="CHEBI:29105"/>
    </ligand>
</feature>
<feature type="binding site" evidence="1">
    <location>
        <position position="37"/>
    </location>
    <ligand>
        <name>Zn(2+)</name>
        <dbReference type="ChEBI" id="CHEBI:29105"/>
    </ligand>
</feature>
<feature type="binding site" evidence="1">
    <location>
        <position position="40"/>
    </location>
    <ligand>
        <name>Zn(2+)</name>
        <dbReference type="ChEBI" id="CHEBI:29105"/>
    </ligand>
</feature>
<proteinExistence type="inferred from homology"/>
<gene>
    <name evidence="1" type="primary">rpmE</name>
    <name type="ordered locus">Desal_2608</name>
</gene>
<sequence>MKKDIHPKLHKATVRCHCGYESELYSTIGEEVSTEICSNCHPFYTGKQRFVDTAGRIDRFKKKFANFDAASKVKGN</sequence>
<keyword id="KW-0479">Metal-binding</keyword>
<keyword id="KW-1185">Reference proteome</keyword>
<keyword id="KW-0687">Ribonucleoprotein</keyword>
<keyword id="KW-0689">Ribosomal protein</keyword>
<keyword id="KW-0694">RNA-binding</keyword>
<keyword id="KW-0699">rRNA-binding</keyword>
<keyword id="KW-0862">Zinc</keyword>
<name>RL31_MARSD</name>
<protein>
    <recommendedName>
        <fullName evidence="1">Large ribosomal subunit protein bL31</fullName>
    </recommendedName>
    <alternativeName>
        <fullName evidence="2">50S ribosomal protein L31</fullName>
    </alternativeName>
</protein>
<reference key="1">
    <citation type="submission" date="2009-06" db="EMBL/GenBank/DDBJ databases">
        <title>Complete sequence of Desulfovibrio salexigens DSM 2638.</title>
        <authorList>
            <consortium name="US DOE Joint Genome Institute"/>
            <person name="Lucas S."/>
            <person name="Copeland A."/>
            <person name="Lapidus A."/>
            <person name="Glavina del Rio T."/>
            <person name="Tice H."/>
            <person name="Bruce D."/>
            <person name="Goodwin L."/>
            <person name="Pitluck S."/>
            <person name="Munk A.C."/>
            <person name="Brettin T."/>
            <person name="Detter J.C."/>
            <person name="Han C."/>
            <person name="Tapia R."/>
            <person name="Larimer F."/>
            <person name="Land M."/>
            <person name="Hauser L."/>
            <person name="Kyrpides N."/>
            <person name="Anderson I."/>
            <person name="Wall J.D."/>
            <person name="Arkin A.P."/>
            <person name="Dehal P."/>
            <person name="Chivian D."/>
            <person name="Giles B."/>
            <person name="Hazen T.C."/>
        </authorList>
    </citation>
    <scope>NUCLEOTIDE SEQUENCE [LARGE SCALE GENOMIC DNA]</scope>
    <source>
        <strain>ATCC 14822 / DSM 2638 / NCIMB 8403 / VKM B-1763</strain>
    </source>
</reference>
<organism>
    <name type="scientific">Maridesulfovibrio salexigens (strain ATCC 14822 / DSM 2638 / NCIMB 8403 / VKM B-1763)</name>
    <name type="common">Desulfovibrio salexigens</name>
    <dbReference type="NCBI Taxonomy" id="526222"/>
    <lineage>
        <taxon>Bacteria</taxon>
        <taxon>Pseudomonadati</taxon>
        <taxon>Thermodesulfobacteriota</taxon>
        <taxon>Desulfovibrionia</taxon>
        <taxon>Desulfovibrionales</taxon>
        <taxon>Desulfovibrionaceae</taxon>
        <taxon>Maridesulfovibrio</taxon>
    </lineage>
</organism>
<evidence type="ECO:0000255" key="1">
    <source>
        <dbReference type="HAMAP-Rule" id="MF_00501"/>
    </source>
</evidence>
<evidence type="ECO:0000305" key="2"/>
<accession>C6BYQ6</accession>